<keyword id="KW-1185">Reference proteome</keyword>
<keyword id="KW-0687">Ribonucleoprotein</keyword>
<keyword id="KW-0689">Ribosomal protein</keyword>
<keyword id="KW-0694">RNA-binding</keyword>
<keyword id="KW-0699">rRNA-binding</keyword>
<keyword id="KW-0820">tRNA-binding</keyword>
<accession>Q2K9M0</accession>
<evidence type="ECO:0000255" key="1">
    <source>
        <dbReference type="HAMAP-Rule" id="MF_00480"/>
    </source>
</evidence>
<evidence type="ECO:0000305" key="2"/>
<organism>
    <name type="scientific">Rhizobium etli (strain ATCC 51251 / DSM 11541 / JCM 21823 / NBRC 15573 / CFN 42)</name>
    <dbReference type="NCBI Taxonomy" id="347834"/>
    <lineage>
        <taxon>Bacteria</taxon>
        <taxon>Pseudomonadati</taxon>
        <taxon>Pseudomonadota</taxon>
        <taxon>Alphaproteobacteria</taxon>
        <taxon>Hyphomicrobiales</taxon>
        <taxon>Rhizobiaceae</taxon>
        <taxon>Rhizobium/Agrobacterium group</taxon>
        <taxon>Rhizobium</taxon>
    </lineage>
</organism>
<protein>
    <recommendedName>
        <fullName evidence="1">Small ribosomal subunit protein uS7</fullName>
    </recommendedName>
    <alternativeName>
        <fullName evidence="2">30S ribosomal protein S7</fullName>
    </alternativeName>
</protein>
<comment type="function">
    <text evidence="1">One of the primary rRNA binding proteins, it binds directly to 16S rRNA where it nucleates assembly of the head domain of the 30S subunit. Is located at the subunit interface close to the decoding center, probably blocks exit of the E-site tRNA.</text>
</comment>
<comment type="subunit">
    <text evidence="1">Part of the 30S ribosomal subunit. Contacts proteins S9 and S11.</text>
</comment>
<comment type="similarity">
    <text evidence="1">Belongs to the universal ribosomal protein uS7 family.</text>
</comment>
<proteinExistence type="inferred from homology"/>
<gene>
    <name evidence="1" type="primary">rpsG</name>
    <name type="ordered locus">RHE_CH01671</name>
</gene>
<feature type="chain" id="PRO_0000241769" description="Small ribosomal subunit protein uS7">
    <location>
        <begin position="1"/>
        <end position="156"/>
    </location>
</feature>
<dbReference type="EMBL" id="CP000133">
    <property type="protein sequence ID" value="ABC90466.1"/>
    <property type="molecule type" value="Genomic_DNA"/>
</dbReference>
<dbReference type="RefSeq" id="WP_004669085.1">
    <property type="nucleotide sequence ID" value="NC_007761.1"/>
</dbReference>
<dbReference type="SMR" id="Q2K9M0"/>
<dbReference type="GeneID" id="91148124"/>
<dbReference type="KEGG" id="ret:RHE_CH01671"/>
<dbReference type="eggNOG" id="COG0049">
    <property type="taxonomic scope" value="Bacteria"/>
</dbReference>
<dbReference type="HOGENOM" id="CLU_072226_1_1_5"/>
<dbReference type="OrthoDB" id="9807653at2"/>
<dbReference type="Proteomes" id="UP000001936">
    <property type="component" value="Chromosome"/>
</dbReference>
<dbReference type="GO" id="GO:0015935">
    <property type="term" value="C:small ribosomal subunit"/>
    <property type="evidence" value="ECO:0007669"/>
    <property type="project" value="InterPro"/>
</dbReference>
<dbReference type="GO" id="GO:0019843">
    <property type="term" value="F:rRNA binding"/>
    <property type="evidence" value="ECO:0007669"/>
    <property type="project" value="UniProtKB-UniRule"/>
</dbReference>
<dbReference type="GO" id="GO:0003735">
    <property type="term" value="F:structural constituent of ribosome"/>
    <property type="evidence" value="ECO:0007669"/>
    <property type="project" value="InterPro"/>
</dbReference>
<dbReference type="GO" id="GO:0000049">
    <property type="term" value="F:tRNA binding"/>
    <property type="evidence" value="ECO:0007669"/>
    <property type="project" value="UniProtKB-UniRule"/>
</dbReference>
<dbReference type="GO" id="GO:0006412">
    <property type="term" value="P:translation"/>
    <property type="evidence" value="ECO:0007669"/>
    <property type="project" value="UniProtKB-UniRule"/>
</dbReference>
<dbReference type="CDD" id="cd14869">
    <property type="entry name" value="uS7_Bacteria"/>
    <property type="match status" value="1"/>
</dbReference>
<dbReference type="FunFam" id="1.10.455.10:FF:000001">
    <property type="entry name" value="30S ribosomal protein S7"/>
    <property type="match status" value="1"/>
</dbReference>
<dbReference type="Gene3D" id="1.10.455.10">
    <property type="entry name" value="Ribosomal protein S7 domain"/>
    <property type="match status" value="1"/>
</dbReference>
<dbReference type="HAMAP" id="MF_00480_B">
    <property type="entry name" value="Ribosomal_uS7_B"/>
    <property type="match status" value="1"/>
</dbReference>
<dbReference type="InterPro" id="IPR000235">
    <property type="entry name" value="Ribosomal_uS7"/>
</dbReference>
<dbReference type="InterPro" id="IPR005717">
    <property type="entry name" value="Ribosomal_uS7_bac/org-type"/>
</dbReference>
<dbReference type="InterPro" id="IPR020606">
    <property type="entry name" value="Ribosomal_uS7_CS"/>
</dbReference>
<dbReference type="InterPro" id="IPR023798">
    <property type="entry name" value="Ribosomal_uS7_dom"/>
</dbReference>
<dbReference type="InterPro" id="IPR036823">
    <property type="entry name" value="Ribosomal_uS7_dom_sf"/>
</dbReference>
<dbReference type="NCBIfam" id="TIGR01029">
    <property type="entry name" value="rpsG_bact"/>
    <property type="match status" value="1"/>
</dbReference>
<dbReference type="PANTHER" id="PTHR11205">
    <property type="entry name" value="RIBOSOMAL PROTEIN S7"/>
    <property type="match status" value="1"/>
</dbReference>
<dbReference type="Pfam" id="PF00177">
    <property type="entry name" value="Ribosomal_S7"/>
    <property type="match status" value="1"/>
</dbReference>
<dbReference type="PIRSF" id="PIRSF002122">
    <property type="entry name" value="RPS7p_RPS7a_RPS5e_RPS7o"/>
    <property type="match status" value="1"/>
</dbReference>
<dbReference type="SUPFAM" id="SSF47973">
    <property type="entry name" value="Ribosomal protein S7"/>
    <property type="match status" value="1"/>
</dbReference>
<dbReference type="PROSITE" id="PS00052">
    <property type="entry name" value="RIBOSOMAL_S7"/>
    <property type="match status" value="1"/>
</dbReference>
<name>RS7_RHIEC</name>
<reference key="1">
    <citation type="journal article" date="2006" name="Proc. Natl. Acad. Sci. U.S.A.">
        <title>The partitioned Rhizobium etli genome: genetic and metabolic redundancy in seven interacting replicons.</title>
        <authorList>
            <person name="Gonzalez V."/>
            <person name="Santamaria R.I."/>
            <person name="Bustos P."/>
            <person name="Hernandez-Gonzalez I."/>
            <person name="Medrano-Soto A."/>
            <person name="Moreno-Hagelsieb G."/>
            <person name="Janga S.C."/>
            <person name="Ramirez M.A."/>
            <person name="Jimenez-Jacinto V."/>
            <person name="Collado-Vides J."/>
            <person name="Davila G."/>
        </authorList>
    </citation>
    <scope>NUCLEOTIDE SEQUENCE [LARGE SCALE GENOMIC DNA]</scope>
    <source>
        <strain>ATCC 51251 / DSM 11541 / JCM 21823 / NBRC 15573 / CFN 42</strain>
    </source>
</reference>
<sequence length="156" mass="17683">MSRRHKAEKREINPDPKFGDLVVTKFMNAIMLDGKKSVAENIVYGAFDAVQGKSKQEPLSVFHSALDNIAPHVEVRSRRVGGATYQVPVDVRPERRQALAIRWLIAAARKRNETTMIDRLSGELLDASNNRGSAVKKREDTHKMADANRAFSHYRW</sequence>